<reference key="1">
    <citation type="journal article" date="2004" name="Genome Res.">
        <title>The status, quality, and expansion of the NIH full-length cDNA project: the Mammalian Gene Collection (MGC).</title>
        <authorList>
            <consortium name="The MGC Project Team"/>
        </authorList>
    </citation>
    <scope>NUCLEOTIDE SEQUENCE [LARGE SCALE MRNA]</scope>
    <source>
        <tissue>Lung</tissue>
        <tissue>Prostate</tissue>
    </source>
</reference>
<feature type="signal peptide" evidence="3">
    <location>
        <begin position="1"/>
        <end position="16"/>
    </location>
</feature>
<feature type="chain" id="PRO_0000273324" description="Lipase member H">
    <location>
        <begin position="17"/>
        <end position="451"/>
    </location>
</feature>
<feature type="active site" description="Nucleophile" evidence="1">
    <location>
        <position position="154"/>
    </location>
</feature>
<feature type="active site" description="Charge relay system" evidence="1">
    <location>
        <position position="178"/>
    </location>
</feature>
<feature type="active site" description="Charge relay system" evidence="1">
    <location>
        <position position="248"/>
    </location>
</feature>
<feature type="glycosylation site" description="N-linked (GlcNAc...) asparagine" evidence="3">
    <location>
        <position position="66"/>
    </location>
</feature>
<feature type="disulfide bond" evidence="1">
    <location>
        <begin position="233"/>
        <end position="246"/>
    </location>
</feature>
<feature type="disulfide bond" evidence="1">
    <location>
        <begin position="270"/>
        <end position="281"/>
    </location>
</feature>
<feature type="disulfide bond" evidence="1">
    <location>
        <begin position="284"/>
        <end position="292"/>
    </location>
</feature>
<feature type="disulfide bond" evidence="1">
    <location>
        <begin position="427"/>
        <end position="446"/>
    </location>
</feature>
<feature type="sequence conflict" description="In Ref. 1; AAH62045." evidence="4" ref="1">
    <original>V</original>
    <variation>I</variation>
    <location>
        <position position="203"/>
    </location>
</feature>
<gene>
    <name type="primary">Liph</name>
</gene>
<name>LIPH_RAT</name>
<comment type="function">
    <text evidence="2">Hydrolyzes specifically phosphatidic acid (PA) to produce 2-acyl lysophosphatidic acid (LPA; a potent bioactive lipid mediator) and fatty acid (By similarity). Does not hydrolyze other phospholipids, like phosphatidylserine (PS), phosphatidylcholine (PC) and phosphatidylethanolamine (PE) or triacylglycerol (TG) (By similarity).</text>
</comment>
<comment type="catalytic activity">
    <reaction evidence="2">
        <text>1-hexadecanoyl-2-(9Z-octadecenoyl)-sn-glycero-3-phosphate + H2O = 2-(9Z-octadecenoyl)-sn-glycero-3-phosphate + hexadecanoate + H(+)</text>
        <dbReference type="Rhea" id="RHEA:40943"/>
        <dbReference type="ChEBI" id="CHEBI:7896"/>
        <dbReference type="ChEBI" id="CHEBI:15377"/>
        <dbReference type="ChEBI" id="CHEBI:15378"/>
        <dbReference type="ChEBI" id="CHEBI:64839"/>
        <dbReference type="ChEBI" id="CHEBI:77593"/>
    </reaction>
    <physiologicalReaction direction="left-to-right" evidence="2">
        <dbReference type="Rhea" id="RHEA:40944"/>
    </physiologicalReaction>
</comment>
<comment type="subunit">
    <text evidence="2">Interacts with TTMP/C3orf52.</text>
</comment>
<comment type="subcellular location">
    <subcellularLocation>
        <location evidence="2">Secreted</location>
    </subcellularLocation>
    <subcellularLocation>
        <location evidence="2">Cell membrane</location>
        <topology>Peripheral membrane protein</topology>
    </subcellularLocation>
</comment>
<comment type="similarity">
    <text evidence="4">Belongs to the AB hydrolase superfamily. Lipase family.</text>
</comment>
<comment type="sequence caution" evidence="4">
    <conflict type="erroneous initiation">
        <sequence resource="EMBL-CDS" id="AAH62045"/>
    </conflict>
</comment>
<proteinExistence type="evidence at transcript level"/>
<accession>Q32PY2</accession>
<accession>Q6P6S8</accession>
<organism>
    <name type="scientific">Rattus norvegicus</name>
    <name type="common">Rat</name>
    <dbReference type="NCBI Taxonomy" id="10116"/>
    <lineage>
        <taxon>Eukaryota</taxon>
        <taxon>Metazoa</taxon>
        <taxon>Chordata</taxon>
        <taxon>Craniata</taxon>
        <taxon>Vertebrata</taxon>
        <taxon>Euteleostomi</taxon>
        <taxon>Mammalia</taxon>
        <taxon>Eutheria</taxon>
        <taxon>Euarchontoglires</taxon>
        <taxon>Glires</taxon>
        <taxon>Rodentia</taxon>
        <taxon>Myomorpha</taxon>
        <taxon>Muroidea</taxon>
        <taxon>Muridae</taxon>
        <taxon>Murinae</taxon>
        <taxon>Rattus</taxon>
    </lineage>
</organism>
<protein>
    <recommendedName>
        <fullName>Lipase member H</fullName>
        <ecNumber>3.1.1.-</ecNumber>
    </recommendedName>
</protein>
<evidence type="ECO:0000250" key="1"/>
<evidence type="ECO:0000250" key="2">
    <source>
        <dbReference type="UniProtKB" id="Q8WWY8"/>
    </source>
</evidence>
<evidence type="ECO:0000255" key="3"/>
<evidence type="ECO:0000305" key="4"/>
<keyword id="KW-1003">Cell membrane</keyword>
<keyword id="KW-1015">Disulfide bond</keyword>
<keyword id="KW-0325">Glycoprotein</keyword>
<keyword id="KW-0378">Hydrolase</keyword>
<keyword id="KW-0442">Lipid degradation</keyword>
<keyword id="KW-0443">Lipid metabolism</keyword>
<keyword id="KW-0472">Membrane</keyword>
<keyword id="KW-1185">Reference proteome</keyword>
<keyword id="KW-0964">Secreted</keyword>
<keyword id="KW-0732">Signal</keyword>
<dbReference type="EC" id="3.1.1.-"/>
<dbReference type="EMBL" id="BC062045">
    <property type="protein sequence ID" value="AAH62045.1"/>
    <property type="status" value="ALT_INIT"/>
    <property type="molecule type" value="mRNA"/>
</dbReference>
<dbReference type="EMBL" id="BC107932">
    <property type="protein sequence ID" value="AAI07933.1"/>
    <property type="molecule type" value="mRNA"/>
</dbReference>
<dbReference type="RefSeq" id="NP_001037744.1">
    <property type="nucleotide sequence ID" value="NM_001044279.1"/>
</dbReference>
<dbReference type="SMR" id="Q32PY2"/>
<dbReference type="FunCoup" id="Q32PY2">
    <property type="interactions" value="275"/>
</dbReference>
<dbReference type="STRING" id="10116.ENSRNOP00000069088"/>
<dbReference type="ESTHER" id="ratno-q6p6s8">
    <property type="family name" value="Phospholipase"/>
</dbReference>
<dbReference type="GlyCosmos" id="Q32PY2">
    <property type="glycosylation" value="1 site, No reported glycans"/>
</dbReference>
<dbReference type="GlyGen" id="Q32PY2">
    <property type="glycosylation" value="1 site"/>
</dbReference>
<dbReference type="PhosphoSitePlus" id="Q32PY2"/>
<dbReference type="PaxDb" id="10116-ENSRNOP00000065168"/>
<dbReference type="GeneID" id="681694"/>
<dbReference type="KEGG" id="rno:681694"/>
<dbReference type="AGR" id="RGD:1592849"/>
<dbReference type="CTD" id="200879"/>
<dbReference type="RGD" id="1592849">
    <property type="gene designation" value="Liph"/>
</dbReference>
<dbReference type="eggNOG" id="ENOG502QUQT">
    <property type="taxonomic scope" value="Eukaryota"/>
</dbReference>
<dbReference type="InParanoid" id="Q32PY2"/>
<dbReference type="PhylomeDB" id="Q32PY2"/>
<dbReference type="Reactome" id="R-RNO-1483166">
    <property type="pathway name" value="Synthesis of PA"/>
</dbReference>
<dbReference type="PRO" id="PR:Q32PY2"/>
<dbReference type="Proteomes" id="UP000002494">
    <property type="component" value="Unplaced"/>
</dbReference>
<dbReference type="GO" id="GO:0005615">
    <property type="term" value="C:extracellular space"/>
    <property type="evidence" value="ECO:0000266"/>
    <property type="project" value="RGD"/>
</dbReference>
<dbReference type="GO" id="GO:0005886">
    <property type="term" value="C:plasma membrane"/>
    <property type="evidence" value="ECO:0000266"/>
    <property type="project" value="RGD"/>
</dbReference>
<dbReference type="GO" id="GO:0052689">
    <property type="term" value="F:carboxylic ester hydrolase activity"/>
    <property type="evidence" value="ECO:0007669"/>
    <property type="project" value="InterPro"/>
</dbReference>
<dbReference type="GO" id="GO:0008201">
    <property type="term" value="F:heparin binding"/>
    <property type="evidence" value="ECO:0000266"/>
    <property type="project" value="RGD"/>
</dbReference>
<dbReference type="GO" id="GO:0004620">
    <property type="term" value="F:phospholipase activity"/>
    <property type="evidence" value="ECO:0000266"/>
    <property type="project" value="RGD"/>
</dbReference>
<dbReference type="GO" id="GO:0016042">
    <property type="term" value="P:lipid catabolic process"/>
    <property type="evidence" value="ECO:0000266"/>
    <property type="project" value="RGD"/>
</dbReference>
<dbReference type="CDD" id="cd00707">
    <property type="entry name" value="Pancreat_lipase_like"/>
    <property type="match status" value="1"/>
</dbReference>
<dbReference type="FunFam" id="3.40.50.1820:FF:000063">
    <property type="entry name" value="Lipase member H"/>
    <property type="match status" value="1"/>
</dbReference>
<dbReference type="Gene3D" id="3.40.50.1820">
    <property type="entry name" value="alpha/beta hydrolase"/>
    <property type="match status" value="1"/>
</dbReference>
<dbReference type="InterPro" id="IPR029058">
    <property type="entry name" value="AB_hydrolase_fold"/>
</dbReference>
<dbReference type="InterPro" id="IPR013818">
    <property type="entry name" value="Lipase"/>
</dbReference>
<dbReference type="InterPro" id="IPR016272">
    <property type="entry name" value="Lipase_LIPH"/>
</dbReference>
<dbReference type="InterPro" id="IPR033906">
    <property type="entry name" value="Lipase_N"/>
</dbReference>
<dbReference type="InterPro" id="IPR000734">
    <property type="entry name" value="TAG_lipase"/>
</dbReference>
<dbReference type="PANTHER" id="PTHR11610">
    <property type="entry name" value="LIPASE"/>
    <property type="match status" value="1"/>
</dbReference>
<dbReference type="PANTHER" id="PTHR11610:SF12">
    <property type="entry name" value="LIPASE MEMBER H"/>
    <property type="match status" value="1"/>
</dbReference>
<dbReference type="Pfam" id="PF00151">
    <property type="entry name" value="Lipase"/>
    <property type="match status" value="1"/>
</dbReference>
<dbReference type="PIRSF" id="PIRSF000865">
    <property type="entry name" value="Lipoprotein_lipase_LIPH"/>
    <property type="match status" value="1"/>
</dbReference>
<dbReference type="PRINTS" id="PR00821">
    <property type="entry name" value="TAGLIPASE"/>
</dbReference>
<dbReference type="SUPFAM" id="SSF53474">
    <property type="entry name" value="alpha/beta-Hydrolases"/>
    <property type="match status" value="1"/>
</dbReference>
<sequence length="451" mass="50826">MLRLCFLLSFMCLVKSDTDETCPSFTRLSFHSAVVGTGLSVRLMLYTQRDQTCAQVINSTALGSLNVTKKTTFIIHGFRPTGSPPVWMEELVQSLISVQEMNVVVVDWNRGATTVIYPHASSKTRKVALILKEFIDQMLAKGASLDNIYMIGVSLGAHIAGFVGEMYSGKLGRITGLDPAGPLFNGRPPEDRLDPSDAQFVDVIHSDTDALGYREALGHIDFYPNGGLDQPGCPKTIFGGIKYFKCDHQMSVFLYLASLQNNCSITAYPCDSYRDYRNGKCVSCGAGHIVSCPSLGYYADNWREYLWDRDPPMTKAFFDTAETKPYCIYHYFVDIISWNKSVRRGFITIKLRGEDGNITESKIDHEPSAFQKYHQVSLLARFNRDLDKVAEISLLFSTKSVVGPKYKLRVLRMKLRSLAHPDRPHLCRYDLVLMENVETFFQPILCSKQQM</sequence>